<organism>
    <name type="scientific">Silene latifolia</name>
    <name type="common">White campion</name>
    <name type="synonym">Bladder campion</name>
    <dbReference type="NCBI Taxonomy" id="37657"/>
    <lineage>
        <taxon>Eukaryota</taxon>
        <taxon>Viridiplantae</taxon>
        <taxon>Streptophyta</taxon>
        <taxon>Embryophyta</taxon>
        <taxon>Tracheophyta</taxon>
        <taxon>Spermatophyta</taxon>
        <taxon>Magnoliopsida</taxon>
        <taxon>eudicotyledons</taxon>
        <taxon>Gunneridae</taxon>
        <taxon>Pentapetalae</taxon>
        <taxon>Caryophyllales</taxon>
        <taxon>Caryophyllaceae</taxon>
        <taxon>Sileneae</taxon>
        <taxon>Silene</taxon>
        <taxon>Silene subgen. Behenantha</taxon>
        <taxon>Silene sect. Melandrium</taxon>
    </lineage>
</organism>
<gene>
    <name type="primary">MEN-8</name>
</gene>
<name>MEN8_SILLA</name>
<accession>O24356</accession>
<sequence length="100" mass="10221">MANNMKSATFCKATWAIFLVALAILVQLKGSEAQAGGCASQLGNLNVCAPYVVPGAVNTNPSQECCAALSGVNHDCMCNTLRVASQLPSSCNLAALNCGN</sequence>
<protein>
    <recommendedName>
        <fullName>Protein MEN-8</fullName>
    </recommendedName>
</protein>
<keyword id="KW-1015">Disulfide bond</keyword>
<keyword id="KW-0964">Secreted</keyword>
<keyword id="KW-0732">Signal</keyword>
<reference key="1">
    <citation type="journal article" date="1997" name="Plant Physiol.">
        <title>Sex determination in dioecious Silene latifolia. Effects of the Y chromosome and the parasitic smut fungus (Ustilago violacea) on gene expression during flower development.</title>
        <authorList>
            <person name="Scutt C.P."/>
            <person name="Li Y."/>
            <person name="Robertson S.E."/>
            <person name="Willis M.E."/>
            <person name="Gilmartin P.M."/>
        </authorList>
    </citation>
    <scope>NUCLEOTIDE SEQUENCE [MRNA]</scope>
    <source>
        <tissue>Flower</tissue>
    </source>
</reference>
<proteinExistence type="inferred from homology"/>
<dbReference type="EMBL" id="Y08780">
    <property type="protein sequence ID" value="CAA70033.1"/>
    <property type="molecule type" value="mRNA"/>
</dbReference>
<dbReference type="GO" id="GO:0005576">
    <property type="term" value="C:extracellular region"/>
    <property type="evidence" value="ECO:0007669"/>
    <property type="project" value="UniProtKB-SubCell"/>
</dbReference>
<dbReference type="Gene3D" id="1.10.110.10">
    <property type="entry name" value="Plant lipid-transfer and hydrophobic proteins"/>
    <property type="match status" value="1"/>
</dbReference>
<dbReference type="InterPro" id="IPR036312">
    <property type="entry name" value="Bifun_inhib/LTP/seed_sf"/>
</dbReference>
<dbReference type="InterPro" id="IPR016140">
    <property type="entry name" value="Bifunc_inhib/LTP/seed_store"/>
</dbReference>
<dbReference type="PANTHER" id="PTHR35501">
    <property type="entry name" value="PROTEIN YY1"/>
    <property type="match status" value="1"/>
</dbReference>
<dbReference type="PANTHER" id="PTHR35501:SF3">
    <property type="entry name" value="PROTEIN YY1"/>
    <property type="match status" value="1"/>
</dbReference>
<dbReference type="Pfam" id="PF00234">
    <property type="entry name" value="Tryp_alpha_amyl"/>
    <property type="match status" value="1"/>
</dbReference>
<dbReference type="SMART" id="SM00499">
    <property type="entry name" value="AAI"/>
    <property type="match status" value="1"/>
</dbReference>
<dbReference type="SUPFAM" id="SSF47699">
    <property type="entry name" value="Bifunctional inhibitor/lipid-transfer protein/seed storage 2S albumin"/>
    <property type="match status" value="1"/>
</dbReference>
<evidence type="ECO:0000250" key="1"/>
<evidence type="ECO:0000255" key="2"/>
<evidence type="ECO:0000305" key="3"/>
<feature type="signal peptide" evidence="2">
    <location>
        <begin position="1"/>
        <end position="33"/>
    </location>
</feature>
<feature type="chain" id="PRO_0000000242" description="Protein MEN-8">
    <location>
        <begin position="34"/>
        <end position="100"/>
    </location>
</feature>
<feature type="disulfide bond" evidence="1">
    <location>
        <begin position="38"/>
        <end position="76"/>
    </location>
</feature>
<feature type="disulfide bond" evidence="1">
    <location>
        <begin position="48"/>
        <end position="65"/>
    </location>
</feature>
<feature type="disulfide bond" evidence="1">
    <location>
        <begin position="66"/>
        <end position="91"/>
    </location>
</feature>
<feature type="disulfide bond" evidence="1">
    <location>
        <begin position="78"/>
        <end position="98"/>
    </location>
</feature>
<comment type="subcellular location">
    <subcellularLocation>
        <location evidence="3">Secreted</location>
    </subcellularLocation>
</comment>
<comment type="similarity">
    <text evidence="3">Belongs to the A9/FIL1 family.</text>
</comment>